<gene>
    <name type="primary">yidC</name>
    <name type="ordered locus">SAV_4312</name>
</gene>
<comment type="function">
    <text evidence="1">Required for the insertion and/or proper folding and/or complex formation of integral membrane proteins into the membrane. Involved in integration of membrane proteins that insert both dependently and independently of the Sec translocase complex, as well as at least some lipoproteins. Aids folding of multispanning membrane proteins (By similarity).</text>
</comment>
<comment type="subunit">
    <text evidence="1">Interacts with the Sec translocase complex via SecD. Specifically interacts with transmembrane segments of nascent integral membrane proteins during membrane integration (By similarity).</text>
</comment>
<comment type="subcellular location">
    <subcellularLocation>
        <location evidence="1">Cell membrane</location>
        <topology evidence="1">Multi-pass membrane protein</topology>
    </subcellularLocation>
</comment>
<comment type="similarity">
    <text evidence="4">Belongs to the OXA1/ALB3/YidC family. Type 1 subfamily.</text>
</comment>
<proteinExistence type="inferred from homology"/>
<dbReference type="EMBL" id="BA000030">
    <property type="protein sequence ID" value="BAC72024.1"/>
    <property type="molecule type" value="Genomic_DNA"/>
</dbReference>
<dbReference type="RefSeq" id="WP_010985737.1">
    <property type="nucleotide sequence ID" value="NZ_JZJK01000079.1"/>
</dbReference>
<dbReference type="SMR" id="P59811"/>
<dbReference type="GeneID" id="41541393"/>
<dbReference type="KEGG" id="sma:SAVERM_4312"/>
<dbReference type="eggNOG" id="COG0706">
    <property type="taxonomic scope" value="Bacteria"/>
</dbReference>
<dbReference type="HOGENOM" id="CLU_036138_3_1_11"/>
<dbReference type="OrthoDB" id="9780552at2"/>
<dbReference type="Proteomes" id="UP000000428">
    <property type="component" value="Chromosome"/>
</dbReference>
<dbReference type="GO" id="GO:0005886">
    <property type="term" value="C:plasma membrane"/>
    <property type="evidence" value="ECO:0007669"/>
    <property type="project" value="UniProtKB-SubCell"/>
</dbReference>
<dbReference type="GO" id="GO:0032977">
    <property type="term" value="F:membrane insertase activity"/>
    <property type="evidence" value="ECO:0007669"/>
    <property type="project" value="InterPro"/>
</dbReference>
<dbReference type="GO" id="GO:0051205">
    <property type="term" value="P:protein insertion into membrane"/>
    <property type="evidence" value="ECO:0007669"/>
    <property type="project" value="TreeGrafter"/>
</dbReference>
<dbReference type="GO" id="GO:0015031">
    <property type="term" value="P:protein transport"/>
    <property type="evidence" value="ECO:0007669"/>
    <property type="project" value="UniProtKB-KW"/>
</dbReference>
<dbReference type="CDD" id="cd20070">
    <property type="entry name" value="5TM_YidC_Alb3"/>
    <property type="match status" value="1"/>
</dbReference>
<dbReference type="InterPro" id="IPR001708">
    <property type="entry name" value="YidC/ALB3/OXA1/COX18"/>
</dbReference>
<dbReference type="InterPro" id="IPR028055">
    <property type="entry name" value="YidC/Oxa/ALB_C"/>
</dbReference>
<dbReference type="InterPro" id="IPR047196">
    <property type="entry name" value="YidC_ALB_C"/>
</dbReference>
<dbReference type="NCBIfam" id="NF002350">
    <property type="entry name" value="PRK01315.1"/>
    <property type="match status" value="1"/>
</dbReference>
<dbReference type="NCBIfam" id="TIGR03592">
    <property type="entry name" value="yidC_oxa1_cterm"/>
    <property type="match status" value="1"/>
</dbReference>
<dbReference type="PANTHER" id="PTHR12428:SF65">
    <property type="entry name" value="CYTOCHROME C OXIDASE ASSEMBLY PROTEIN COX18, MITOCHONDRIAL"/>
    <property type="match status" value="1"/>
</dbReference>
<dbReference type="PANTHER" id="PTHR12428">
    <property type="entry name" value="OXA1"/>
    <property type="match status" value="1"/>
</dbReference>
<dbReference type="Pfam" id="PF02096">
    <property type="entry name" value="60KD_IMP"/>
    <property type="match status" value="1"/>
</dbReference>
<evidence type="ECO:0000250" key="1"/>
<evidence type="ECO:0000255" key="2"/>
<evidence type="ECO:0000256" key="3">
    <source>
        <dbReference type="SAM" id="MobiDB-lite"/>
    </source>
</evidence>
<evidence type="ECO:0000305" key="4"/>
<organism>
    <name type="scientific">Streptomyces avermitilis (strain ATCC 31267 / DSM 46492 / JCM 5070 / NBRC 14893 / NCIMB 12804 / NRRL 8165 / MA-4680)</name>
    <dbReference type="NCBI Taxonomy" id="227882"/>
    <lineage>
        <taxon>Bacteria</taxon>
        <taxon>Bacillati</taxon>
        <taxon>Actinomycetota</taxon>
        <taxon>Actinomycetes</taxon>
        <taxon>Kitasatosporales</taxon>
        <taxon>Streptomycetaceae</taxon>
        <taxon>Streptomyces</taxon>
    </lineage>
</organism>
<name>YIDC_STRAW</name>
<keyword id="KW-1003">Cell membrane</keyword>
<keyword id="KW-0143">Chaperone</keyword>
<keyword id="KW-0472">Membrane</keyword>
<keyword id="KW-0653">Protein transport</keyword>
<keyword id="KW-1185">Reference proteome</keyword>
<keyword id="KW-0812">Transmembrane</keyword>
<keyword id="KW-1133">Transmembrane helix</keyword>
<keyword id="KW-0813">Transport</keyword>
<feature type="chain" id="PRO_0000124755" description="Membrane protein insertase YidC">
    <location>
        <begin position="1"/>
        <end position="428"/>
    </location>
</feature>
<feature type="transmembrane region" description="Helical" evidence="2">
    <location>
        <begin position="3"/>
        <end position="23"/>
    </location>
</feature>
<feature type="transmembrane region" description="Helical" evidence="2">
    <location>
        <begin position="38"/>
        <end position="58"/>
    </location>
</feature>
<feature type="transmembrane region" description="Helical" evidence="2">
    <location>
        <begin position="220"/>
        <end position="240"/>
    </location>
</feature>
<feature type="region of interest" description="Disordered" evidence="3">
    <location>
        <begin position="330"/>
        <end position="428"/>
    </location>
</feature>
<feature type="compositionally biased region" description="Low complexity" evidence="3">
    <location>
        <begin position="359"/>
        <end position="369"/>
    </location>
</feature>
<feature type="compositionally biased region" description="Basic and acidic residues" evidence="3">
    <location>
        <begin position="383"/>
        <end position="392"/>
    </location>
</feature>
<feature type="compositionally biased region" description="Polar residues" evidence="3">
    <location>
        <begin position="402"/>
        <end position="415"/>
    </location>
</feature>
<feature type="compositionally biased region" description="Basic residues" evidence="3">
    <location>
        <begin position="418"/>
        <end position="428"/>
    </location>
</feature>
<sequence length="428" mass="46982">MDTIASLFSFITIPVSWVIVQFHSVYGKVFGADTGWAWGLSIVSLVILIRICLIPLFVKQIKATRAMQTLQPEMKKIQERYKNDKQRQSEEMMKLYKESGTNPLSSCLPILAQSPFFFALYHVLNGIATGKTIGVIDDQLLASARKAHIFGAPLAAKFTDSADKVTQLGATLMDVRVVTAIMIVLMSASQFYTQRQLMTKNVDTTVKTPFMQQQKMLMYVFPVMFAIFGINFPVGVLVYWLTTNVWTMGQQMYVIRNNPTPGSKAQAAFLERLQKHVLHHGKTRSRGQRAVVKAIVAKGRDRNEFERKFINALTKAGLAAQSDGTIGKGEATAVAETEDGTQTTGGAPRRQQPKRQSKSQRQSGSAKAAGESEPKSTPLSLSKSDEPDDAKPAAKPAGGANKPSTGTRSKAQSGQRKGPQRPKSPSKK</sequence>
<reference key="1">
    <citation type="journal article" date="2001" name="Proc. Natl. Acad. Sci. U.S.A.">
        <title>Genome sequence of an industrial microorganism Streptomyces avermitilis: deducing the ability of producing secondary metabolites.</title>
        <authorList>
            <person name="Omura S."/>
            <person name="Ikeda H."/>
            <person name="Ishikawa J."/>
            <person name="Hanamoto A."/>
            <person name="Takahashi C."/>
            <person name="Shinose M."/>
            <person name="Takahashi Y."/>
            <person name="Horikawa H."/>
            <person name="Nakazawa H."/>
            <person name="Osonoe T."/>
            <person name="Kikuchi H."/>
            <person name="Shiba T."/>
            <person name="Sakaki Y."/>
            <person name="Hattori M."/>
        </authorList>
    </citation>
    <scope>NUCLEOTIDE SEQUENCE [LARGE SCALE GENOMIC DNA]</scope>
    <source>
        <strain>ATCC 31267 / DSM 46492 / JCM 5070 / NBRC 14893 / NCIMB 12804 / NRRL 8165 / MA-4680</strain>
    </source>
</reference>
<reference key="2">
    <citation type="journal article" date="2003" name="Nat. Biotechnol.">
        <title>Complete genome sequence and comparative analysis of the industrial microorganism Streptomyces avermitilis.</title>
        <authorList>
            <person name="Ikeda H."/>
            <person name="Ishikawa J."/>
            <person name="Hanamoto A."/>
            <person name="Shinose M."/>
            <person name="Kikuchi H."/>
            <person name="Shiba T."/>
            <person name="Sakaki Y."/>
            <person name="Hattori M."/>
            <person name="Omura S."/>
        </authorList>
    </citation>
    <scope>NUCLEOTIDE SEQUENCE [LARGE SCALE GENOMIC DNA]</scope>
    <source>
        <strain>ATCC 31267 / DSM 46492 / JCM 5070 / NBRC 14893 / NCIMB 12804 / NRRL 8165 / MA-4680</strain>
    </source>
</reference>
<protein>
    <recommendedName>
        <fullName>Membrane protein insertase YidC</fullName>
    </recommendedName>
    <alternativeName>
        <fullName>Foldase YidC</fullName>
    </alternativeName>
    <alternativeName>
        <fullName>Membrane integrase YidC</fullName>
    </alternativeName>
    <alternativeName>
        <fullName>Membrane protein YidC</fullName>
    </alternativeName>
</protein>
<accession>P59811</accession>